<proteinExistence type="inferred from homology"/>
<dbReference type="EC" id="1.11.1.21" evidence="1"/>
<dbReference type="EMBL" id="CP000390">
    <property type="protein sequence ID" value="ABG62026.1"/>
    <property type="molecule type" value="Genomic_DNA"/>
</dbReference>
<dbReference type="SMR" id="Q11KP9"/>
<dbReference type="STRING" id="266779.Meso_0626"/>
<dbReference type="PeroxiBase" id="2333">
    <property type="entry name" value="MspCP01_BNC1"/>
</dbReference>
<dbReference type="KEGG" id="mes:Meso_0626"/>
<dbReference type="eggNOG" id="COG0376">
    <property type="taxonomic scope" value="Bacteria"/>
</dbReference>
<dbReference type="HOGENOM" id="CLU_025424_2_0_5"/>
<dbReference type="OrthoDB" id="9759743at2"/>
<dbReference type="GO" id="GO:0005829">
    <property type="term" value="C:cytosol"/>
    <property type="evidence" value="ECO:0007669"/>
    <property type="project" value="TreeGrafter"/>
</dbReference>
<dbReference type="GO" id="GO:0004096">
    <property type="term" value="F:catalase activity"/>
    <property type="evidence" value="ECO:0007669"/>
    <property type="project" value="UniProtKB-UniRule"/>
</dbReference>
<dbReference type="GO" id="GO:0020037">
    <property type="term" value="F:heme binding"/>
    <property type="evidence" value="ECO:0007669"/>
    <property type="project" value="InterPro"/>
</dbReference>
<dbReference type="GO" id="GO:0046872">
    <property type="term" value="F:metal ion binding"/>
    <property type="evidence" value="ECO:0007669"/>
    <property type="project" value="UniProtKB-KW"/>
</dbReference>
<dbReference type="GO" id="GO:0070301">
    <property type="term" value="P:cellular response to hydrogen peroxide"/>
    <property type="evidence" value="ECO:0007669"/>
    <property type="project" value="TreeGrafter"/>
</dbReference>
<dbReference type="GO" id="GO:0042744">
    <property type="term" value="P:hydrogen peroxide catabolic process"/>
    <property type="evidence" value="ECO:0007669"/>
    <property type="project" value="UniProtKB-KW"/>
</dbReference>
<dbReference type="CDD" id="cd00649">
    <property type="entry name" value="catalase_peroxidase_1"/>
    <property type="match status" value="1"/>
</dbReference>
<dbReference type="CDD" id="cd08200">
    <property type="entry name" value="catalase_peroxidase_2"/>
    <property type="match status" value="1"/>
</dbReference>
<dbReference type="FunFam" id="1.10.420.10:FF:000002">
    <property type="entry name" value="Catalase-peroxidase"/>
    <property type="match status" value="1"/>
</dbReference>
<dbReference type="FunFam" id="1.10.420.10:FF:000004">
    <property type="entry name" value="Catalase-peroxidase"/>
    <property type="match status" value="1"/>
</dbReference>
<dbReference type="FunFam" id="1.10.520.10:FF:000002">
    <property type="entry name" value="Catalase-peroxidase"/>
    <property type="match status" value="1"/>
</dbReference>
<dbReference type="FunFam" id="1.10.520.10:FF:000004">
    <property type="entry name" value="Catalase-peroxidase"/>
    <property type="match status" value="1"/>
</dbReference>
<dbReference type="Gene3D" id="1.10.520.10">
    <property type="match status" value="2"/>
</dbReference>
<dbReference type="Gene3D" id="1.10.420.10">
    <property type="entry name" value="Peroxidase, domain 2"/>
    <property type="match status" value="2"/>
</dbReference>
<dbReference type="HAMAP" id="MF_01961">
    <property type="entry name" value="Catal_peroxid"/>
    <property type="match status" value="1"/>
</dbReference>
<dbReference type="InterPro" id="IPR000763">
    <property type="entry name" value="Catalase_peroxidase"/>
</dbReference>
<dbReference type="InterPro" id="IPR002016">
    <property type="entry name" value="Haem_peroxidase"/>
</dbReference>
<dbReference type="InterPro" id="IPR010255">
    <property type="entry name" value="Haem_peroxidase_sf"/>
</dbReference>
<dbReference type="InterPro" id="IPR019794">
    <property type="entry name" value="Peroxidases_AS"/>
</dbReference>
<dbReference type="InterPro" id="IPR019793">
    <property type="entry name" value="Peroxidases_heam-ligand_BS"/>
</dbReference>
<dbReference type="NCBIfam" id="TIGR00198">
    <property type="entry name" value="cat_per_HPI"/>
    <property type="match status" value="1"/>
</dbReference>
<dbReference type="NCBIfam" id="NF011635">
    <property type="entry name" value="PRK15061.1"/>
    <property type="match status" value="1"/>
</dbReference>
<dbReference type="PANTHER" id="PTHR30555:SF0">
    <property type="entry name" value="CATALASE-PEROXIDASE"/>
    <property type="match status" value="1"/>
</dbReference>
<dbReference type="PANTHER" id="PTHR30555">
    <property type="entry name" value="HYDROPEROXIDASE I, BIFUNCTIONAL CATALASE-PEROXIDASE"/>
    <property type="match status" value="1"/>
</dbReference>
<dbReference type="Pfam" id="PF00141">
    <property type="entry name" value="peroxidase"/>
    <property type="match status" value="2"/>
</dbReference>
<dbReference type="PRINTS" id="PR00460">
    <property type="entry name" value="BPEROXIDASE"/>
</dbReference>
<dbReference type="PRINTS" id="PR00458">
    <property type="entry name" value="PEROXIDASE"/>
</dbReference>
<dbReference type="SUPFAM" id="SSF48113">
    <property type="entry name" value="Heme-dependent peroxidases"/>
    <property type="match status" value="2"/>
</dbReference>
<dbReference type="PROSITE" id="PS00435">
    <property type="entry name" value="PEROXIDASE_1"/>
    <property type="match status" value="1"/>
</dbReference>
<dbReference type="PROSITE" id="PS00436">
    <property type="entry name" value="PEROXIDASE_2"/>
    <property type="match status" value="1"/>
</dbReference>
<dbReference type="PROSITE" id="PS50873">
    <property type="entry name" value="PEROXIDASE_4"/>
    <property type="match status" value="1"/>
</dbReference>
<protein>
    <recommendedName>
        <fullName evidence="1">Catalase-peroxidase</fullName>
        <shortName evidence="1">CP</shortName>
        <ecNumber evidence="1">1.11.1.21</ecNumber>
    </recommendedName>
    <alternativeName>
        <fullName evidence="1">Peroxidase/catalase</fullName>
    </alternativeName>
</protein>
<name>KATG_CHESB</name>
<comment type="function">
    <text evidence="1">Bifunctional enzyme with both catalase and broad-spectrum peroxidase activity.</text>
</comment>
<comment type="catalytic activity">
    <reaction evidence="1">
        <text>H2O2 + AH2 = A + 2 H2O</text>
        <dbReference type="Rhea" id="RHEA:30275"/>
        <dbReference type="ChEBI" id="CHEBI:13193"/>
        <dbReference type="ChEBI" id="CHEBI:15377"/>
        <dbReference type="ChEBI" id="CHEBI:16240"/>
        <dbReference type="ChEBI" id="CHEBI:17499"/>
        <dbReference type="EC" id="1.11.1.21"/>
    </reaction>
</comment>
<comment type="catalytic activity">
    <reaction evidence="1">
        <text>2 H2O2 = O2 + 2 H2O</text>
        <dbReference type="Rhea" id="RHEA:20309"/>
        <dbReference type="ChEBI" id="CHEBI:15377"/>
        <dbReference type="ChEBI" id="CHEBI:15379"/>
        <dbReference type="ChEBI" id="CHEBI:16240"/>
        <dbReference type="EC" id="1.11.1.21"/>
    </reaction>
</comment>
<comment type="cofactor">
    <cofactor evidence="1">
        <name>heme b</name>
        <dbReference type="ChEBI" id="CHEBI:60344"/>
    </cofactor>
    <text evidence="1">Binds 1 heme b (iron(II)-protoporphyrin IX) group per dimer.</text>
</comment>
<comment type="subunit">
    <text evidence="1">Homodimer or homotetramer.</text>
</comment>
<comment type="PTM">
    <text evidence="1">Formation of the three residue Trp-Tyr-Met cross-link is important for the catalase, but not the peroxidase activity of the enzyme.</text>
</comment>
<comment type="similarity">
    <text evidence="1">Belongs to the peroxidase family. Peroxidase/catalase subfamily.</text>
</comment>
<sequence>MDAKTDDSAGKCPFTGGGRRGHRNRDWWPEQLDLDVLHRNSTLSDPMGEDFDYAEEFKSLDLNAVIQDLHALMTDSQDWWPADFGHYGGLMIRMAWHSAGTYRITDGRGGAGAGQQRFAPLNSWPDNANLDKARRMLWPIKQKYGRKISWADLMILAGNVALESMGFKTFGFAGGRKDVWEPEELFWGPEGTWLGDERYSGERQLSEPLAAVQMGLIYVNPEGPNGNPDPVAAAKDIRETFYRMAMNDEETVALIAGGHTFGKTHGAGDPSLIGPDPEGAAIEDQGLGWKSGHGTGFGADTITGGPEVTWSQTPTRWSNYFFENLFGYEWELTKSPAGAWQWKAKNAEATVPDAHDPSKKHVPTMLTTDLSLRFDPIYEKISRRFLENPDQFADAFARAWFKLTHRDMGPKVRYLGPLVPKETLIWQDPIPEVDHVLVDDQDIAGLKAKILASGLSVSELVSTAWASASTFRGSDKRGGANGARIRLAPQKDWEVNDPAQLAKVLQRLEAIQGEFNAAQAGGKKISLADLIVLGGCAAVEKAARDAGVDVKVPFTPGRMDASQEQTDIDSFRALEPRADGFRNYLSGRQFMMPEEALVDRAQLLRLTAPEMTVLLGGLRVLGANSGGSEHGVLTKQVGKLTNDFFVNLLTMNTQWQPIADGTYEGRDRKTNELKWRATRVDLIFGAHSQLRALAEVYACGDSQEKFVQDFVAAWTKVMNADRFDLA</sequence>
<organism>
    <name type="scientific">Chelativorans sp. (strain BNC1)</name>
    <dbReference type="NCBI Taxonomy" id="266779"/>
    <lineage>
        <taxon>Bacteria</taxon>
        <taxon>Pseudomonadati</taxon>
        <taxon>Pseudomonadota</taxon>
        <taxon>Alphaproteobacteria</taxon>
        <taxon>Hyphomicrobiales</taxon>
        <taxon>Phyllobacteriaceae</taxon>
        <taxon>Chelativorans</taxon>
    </lineage>
</organism>
<evidence type="ECO:0000255" key="1">
    <source>
        <dbReference type="HAMAP-Rule" id="MF_01961"/>
    </source>
</evidence>
<evidence type="ECO:0000256" key="2">
    <source>
        <dbReference type="SAM" id="MobiDB-lite"/>
    </source>
</evidence>
<keyword id="KW-0349">Heme</keyword>
<keyword id="KW-0376">Hydrogen peroxide</keyword>
<keyword id="KW-0408">Iron</keyword>
<keyword id="KW-0479">Metal-binding</keyword>
<keyword id="KW-0560">Oxidoreductase</keyword>
<keyword id="KW-0575">Peroxidase</keyword>
<feature type="chain" id="PRO_0000354830" description="Catalase-peroxidase">
    <location>
        <begin position="1"/>
        <end position="726"/>
    </location>
</feature>
<feature type="region of interest" description="Disordered" evidence="2">
    <location>
        <begin position="1"/>
        <end position="25"/>
    </location>
</feature>
<feature type="active site" description="Proton acceptor" evidence="1">
    <location>
        <position position="97"/>
    </location>
</feature>
<feature type="binding site" description="axial binding residue" evidence="1">
    <location>
        <position position="259"/>
    </location>
    <ligand>
        <name>heme b</name>
        <dbReference type="ChEBI" id="CHEBI:60344"/>
    </ligand>
    <ligandPart>
        <name>Fe</name>
        <dbReference type="ChEBI" id="CHEBI:18248"/>
    </ligandPart>
</feature>
<feature type="site" description="Transition state stabilizer" evidence="1">
    <location>
        <position position="93"/>
    </location>
</feature>
<feature type="cross-link" description="Tryptophyl-tyrosyl-methioninium (Trp-Tyr) (with M-244)" evidence="1">
    <location>
        <begin position="96"/>
        <end position="218"/>
    </location>
</feature>
<feature type="cross-link" description="Tryptophyl-tyrosyl-methioninium (Tyr-Met) (with W-96)" evidence="1">
    <location>
        <begin position="218"/>
        <end position="244"/>
    </location>
</feature>
<gene>
    <name evidence="1" type="primary">katG</name>
    <name type="ordered locus">Meso_0626</name>
</gene>
<reference key="1">
    <citation type="submission" date="2006-06" db="EMBL/GenBank/DDBJ databases">
        <title>Complete sequence of chromosome of Mesorhizobium sp. BNC1.</title>
        <authorList>
            <consortium name="US DOE Joint Genome Institute"/>
            <person name="Copeland A."/>
            <person name="Lucas S."/>
            <person name="Lapidus A."/>
            <person name="Barry K."/>
            <person name="Detter J.C."/>
            <person name="Glavina del Rio T."/>
            <person name="Hammon N."/>
            <person name="Israni S."/>
            <person name="Dalin E."/>
            <person name="Tice H."/>
            <person name="Pitluck S."/>
            <person name="Chertkov O."/>
            <person name="Brettin T."/>
            <person name="Bruce D."/>
            <person name="Han C."/>
            <person name="Tapia R."/>
            <person name="Gilna P."/>
            <person name="Schmutz J."/>
            <person name="Larimer F."/>
            <person name="Land M."/>
            <person name="Hauser L."/>
            <person name="Kyrpides N."/>
            <person name="Mikhailova N."/>
            <person name="Richardson P."/>
        </authorList>
    </citation>
    <scope>NUCLEOTIDE SEQUENCE [LARGE SCALE GENOMIC DNA]</scope>
    <source>
        <strain>BNC1</strain>
    </source>
</reference>
<accession>Q11KP9</accession>